<dbReference type="EC" id="3.2.2.8" evidence="1"/>
<dbReference type="EMBL" id="CU928162">
    <property type="protein sequence ID" value="CAR08642.1"/>
    <property type="molecule type" value="Genomic_DNA"/>
</dbReference>
<dbReference type="RefSeq" id="WP_000415422.1">
    <property type="nucleotide sequence ID" value="NC_011745.1"/>
</dbReference>
<dbReference type="SMR" id="B7MX26"/>
<dbReference type="GeneID" id="75056720"/>
<dbReference type="KEGG" id="ecq:ECED1_2610"/>
<dbReference type="HOGENOM" id="CLU_036838_2_0_6"/>
<dbReference type="Proteomes" id="UP000000748">
    <property type="component" value="Chromosome"/>
</dbReference>
<dbReference type="GO" id="GO:0005829">
    <property type="term" value="C:cytosol"/>
    <property type="evidence" value="ECO:0007669"/>
    <property type="project" value="TreeGrafter"/>
</dbReference>
<dbReference type="GO" id="GO:0005509">
    <property type="term" value="F:calcium ion binding"/>
    <property type="evidence" value="ECO:0007669"/>
    <property type="project" value="UniProtKB-UniRule"/>
</dbReference>
<dbReference type="GO" id="GO:0008477">
    <property type="term" value="F:purine nucleosidase activity"/>
    <property type="evidence" value="ECO:0007669"/>
    <property type="project" value="TreeGrafter"/>
</dbReference>
<dbReference type="GO" id="GO:0045437">
    <property type="term" value="F:uridine nucleosidase activity"/>
    <property type="evidence" value="ECO:0007669"/>
    <property type="project" value="UniProtKB-ARBA"/>
</dbReference>
<dbReference type="GO" id="GO:0006152">
    <property type="term" value="P:purine nucleoside catabolic process"/>
    <property type="evidence" value="ECO:0007669"/>
    <property type="project" value="TreeGrafter"/>
</dbReference>
<dbReference type="GO" id="GO:0006206">
    <property type="term" value="P:pyrimidine nucleobase metabolic process"/>
    <property type="evidence" value="ECO:0007669"/>
    <property type="project" value="UniProtKB-UniRule"/>
</dbReference>
<dbReference type="GO" id="GO:0046133">
    <property type="term" value="P:pyrimidine ribonucleoside catabolic process"/>
    <property type="evidence" value="ECO:0007669"/>
    <property type="project" value="InterPro"/>
</dbReference>
<dbReference type="CDD" id="cd02651">
    <property type="entry name" value="nuc_hydro_IU_UC_XIUA"/>
    <property type="match status" value="1"/>
</dbReference>
<dbReference type="FunFam" id="3.90.245.10:FF:000003">
    <property type="entry name" value="Pyrimidine-specific ribonucleoside hydrolase RihB"/>
    <property type="match status" value="1"/>
</dbReference>
<dbReference type="Gene3D" id="3.90.245.10">
    <property type="entry name" value="Ribonucleoside hydrolase-like"/>
    <property type="match status" value="1"/>
</dbReference>
<dbReference type="HAMAP" id="MF_01433">
    <property type="entry name" value="Pyrim_hydro_RihB"/>
    <property type="match status" value="1"/>
</dbReference>
<dbReference type="InterPro" id="IPR015910">
    <property type="entry name" value="I/U_nuclsd_hydro_CS"/>
</dbReference>
<dbReference type="InterPro" id="IPR001910">
    <property type="entry name" value="Inosine/uridine_hydrolase_dom"/>
</dbReference>
<dbReference type="InterPro" id="IPR023186">
    <property type="entry name" value="IUNH"/>
</dbReference>
<dbReference type="InterPro" id="IPR022977">
    <property type="entry name" value="Pyrim_hydro_RihB"/>
</dbReference>
<dbReference type="InterPro" id="IPR036452">
    <property type="entry name" value="Ribo_hydro-like"/>
</dbReference>
<dbReference type="NCBIfam" id="NF007417">
    <property type="entry name" value="PRK09955.1"/>
    <property type="match status" value="1"/>
</dbReference>
<dbReference type="PANTHER" id="PTHR12304">
    <property type="entry name" value="INOSINE-URIDINE PREFERRING NUCLEOSIDE HYDROLASE"/>
    <property type="match status" value="1"/>
</dbReference>
<dbReference type="PANTHER" id="PTHR12304:SF4">
    <property type="entry name" value="URIDINE NUCLEOSIDASE"/>
    <property type="match status" value="1"/>
</dbReference>
<dbReference type="Pfam" id="PF01156">
    <property type="entry name" value="IU_nuc_hydro"/>
    <property type="match status" value="1"/>
</dbReference>
<dbReference type="SUPFAM" id="SSF53590">
    <property type="entry name" value="Nucleoside hydrolase"/>
    <property type="match status" value="1"/>
</dbReference>
<dbReference type="PROSITE" id="PS01247">
    <property type="entry name" value="IUNH"/>
    <property type="match status" value="1"/>
</dbReference>
<organism>
    <name type="scientific">Escherichia coli O81 (strain ED1a)</name>
    <dbReference type="NCBI Taxonomy" id="585397"/>
    <lineage>
        <taxon>Bacteria</taxon>
        <taxon>Pseudomonadati</taxon>
        <taxon>Pseudomonadota</taxon>
        <taxon>Gammaproteobacteria</taxon>
        <taxon>Enterobacterales</taxon>
        <taxon>Enterobacteriaceae</taxon>
        <taxon>Escherichia</taxon>
    </lineage>
</organism>
<evidence type="ECO:0000255" key="1">
    <source>
        <dbReference type="HAMAP-Rule" id="MF_01433"/>
    </source>
</evidence>
<protein>
    <recommendedName>
        <fullName evidence="1">Pyrimidine-specific ribonucleoside hydrolase RihB</fullName>
        <ecNumber evidence="1">3.2.2.8</ecNumber>
    </recommendedName>
    <alternativeName>
        <fullName evidence="1">Cytidine/uridine-specific hydrolase</fullName>
    </alternativeName>
</protein>
<name>RIHB_ECO81</name>
<reference key="1">
    <citation type="journal article" date="2009" name="PLoS Genet.">
        <title>Organised genome dynamics in the Escherichia coli species results in highly diverse adaptive paths.</title>
        <authorList>
            <person name="Touchon M."/>
            <person name="Hoede C."/>
            <person name="Tenaillon O."/>
            <person name="Barbe V."/>
            <person name="Baeriswyl S."/>
            <person name="Bidet P."/>
            <person name="Bingen E."/>
            <person name="Bonacorsi S."/>
            <person name="Bouchier C."/>
            <person name="Bouvet O."/>
            <person name="Calteau A."/>
            <person name="Chiapello H."/>
            <person name="Clermont O."/>
            <person name="Cruveiller S."/>
            <person name="Danchin A."/>
            <person name="Diard M."/>
            <person name="Dossat C."/>
            <person name="Karoui M.E."/>
            <person name="Frapy E."/>
            <person name="Garry L."/>
            <person name="Ghigo J.M."/>
            <person name="Gilles A.M."/>
            <person name="Johnson J."/>
            <person name="Le Bouguenec C."/>
            <person name="Lescat M."/>
            <person name="Mangenot S."/>
            <person name="Martinez-Jehanne V."/>
            <person name="Matic I."/>
            <person name="Nassif X."/>
            <person name="Oztas S."/>
            <person name="Petit M.A."/>
            <person name="Pichon C."/>
            <person name="Rouy Z."/>
            <person name="Ruf C.S."/>
            <person name="Schneider D."/>
            <person name="Tourret J."/>
            <person name="Vacherie B."/>
            <person name="Vallenet D."/>
            <person name="Medigue C."/>
            <person name="Rocha E.P.C."/>
            <person name="Denamur E."/>
        </authorList>
    </citation>
    <scope>NUCLEOTIDE SEQUENCE [LARGE SCALE GENOMIC DNA]</scope>
    <source>
        <strain>ED1a</strain>
    </source>
</reference>
<sequence length="313" mass="33775">MEKRKIILDCDPGHDDAIAIMMAAKHPAIDLLGITIVAGNQTLDKTLINGLNVCQKLEINVPVYAGMPQPIMRQQIVADNIHGETGLDGPVFEPLTRQAENTHAVKYIIDTLMASDGDITLVPVGPLSNIAVAMRMQPAILPKIREIVLMGGAYGTGNFTPSAEFNIFADPEAARVVFTSGVPLVMMGLDLTNQTVCTPDVIARMERAGGPAGELFSDIMNFTLKTQFENYGLAGGPVHDATCIGYLINPDGIKTQEMYVEVDVNSGPCYGRTVCDELGVLGKPANTKVGITIDTDWFWGLVEECVRGYIKTH</sequence>
<gene>
    <name evidence="1" type="primary">rihB</name>
    <name type="ordered locus">ECED1_2610</name>
</gene>
<comment type="function">
    <text evidence="1">Hydrolyzes cytidine or uridine to ribose and cytosine or uracil, respectively. Has a clear preference for cytidine over uridine. Strictly specific for ribonucleosides.</text>
</comment>
<comment type="catalytic activity">
    <reaction evidence="1">
        <text>a pyrimidine ribonucleoside + H2O = a pyrimidine nucleobase + D-ribose</text>
        <dbReference type="Rhea" id="RHEA:56816"/>
        <dbReference type="ChEBI" id="CHEBI:15377"/>
        <dbReference type="ChEBI" id="CHEBI:26432"/>
        <dbReference type="ChEBI" id="CHEBI:47013"/>
        <dbReference type="ChEBI" id="CHEBI:141014"/>
        <dbReference type="EC" id="3.2.2.8"/>
    </reaction>
</comment>
<comment type="cofactor">
    <cofactor evidence="1">
        <name>Ca(2+)</name>
        <dbReference type="ChEBI" id="CHEBI:29108"/>
    </cofactor>
    <text evidence="1">Binds 1 Ca(2+) ion per monomer.</text>
</comment>
<comment type="subunit">
    <text evidence="1">Homotetramer.</text>
</comment>
<comment type="similarity">
    <text evidence="1">Belongs to the IUNH family. RihB subfamily.</text>
</comment>
<feature type="chain" id="PRO_1000184902" description="Pyrimidine-specific ribonucleoside hydrolase RihB">
    <location>
        <begin position="1"/>
        <end position="313"/>
    </location>
</feature>
<feature type="active site" description="Proton acceptor" evidence="1">
    <location>
        <position position="11"/>
    </location>
</feature>
<feature type="binding site" evidence="1">
    <location>
        <position position="11"/>
    </location>
    <ligand>
        <name>Ca(2+)</name>
        <dbReference type="ChEBI" id="CHEBI:29108"/>
    </ligand>
</feature>
<feature type="binding site" evidence="1">
    <location>
        <position position="16"/>
    </location>
    <ligand>
        <name>Ca(2+)</name>
        <dbReference type="ChEBI" id="CHEBI:29108"/>
    </ligand>
</feature>
<feature type="binding site" evidence="1">
    <location>
        <position position="124"/>
    </location>
    <ligand>
        <name>Ca(2+)</name>
        <dbReference type="ChEBI" id="CHEBI:29108"/>
    </ligand>
</feature>
<feature type="binding site" evidence="1">
    <location>
        <position position="227"/>
    </location>
    <ligand>
        <name>substrate</name>
    </ligand>
</feature>
<feature type="binding site" evidence="1">
    <location>
        <position position="239"/>
    </location>
    <ligand>
        <name>substrate</name>
    </ligand>
</feature>
<feature type="binding site" evidence="1">
    <location>
        <position position="240"/>
    </location>
    <ligand>
        <name>Ca(2+)</name>
        <dbReference type="ChEBI" id="CHEBI:29108"/>
    </ligand>
</feature>
<proteinExistence type="inferred from homology"/>
<accession>B7MX26</accession>
<keyword id="KW-0106">Calcium</keyword>
<keyword id="KW-0326">Glycosidase</keyword>
<keyword id="KW-0378">Hydrolase</keyword>
<keyword id="KW-0479">Metal-binding</keyword>